<organism>
    <name type="scientific">Pediococcus pentosaceus (strain ATCC 25745 / CCUG 21536 / LMG 10740 / 183-1w)</name>
    <dbReference type="NCBI Taxonomy" id="278197"/>
    <lineage>
        <taxon>Bacteria</taxon>
        <taxon>Bacillati</taxon>
        <taxon>Bacillota</taxon>
        <taxon>Bacilli</taxon>
        <taxon>Lactobacillales</taxon>
        <taxon>Lactobacillaceae</taxon>
        <taxon>Pediococcus</taxon>
    </lineage>
</organism>
<reference key="1">
    <citation type="journal article" date="2006" name="Proc. Natl. Acad. Sci. U.S.A.">
        <title>Comparative genomics of the lactic acid bacteria.</title>
        <authorList>
            <person name="Makarova K.S."/>
            <person name="Slesarev A."/>
            <person name="Wolf Y.I."/>
            <person name="Sorokin A."/>
            <person name="Mirkin B."/>
            <person name="Koonin E.V."/>
            <person name="Pavlov A."/>
            <person name="Pavlova N."/>
            <person name="Karamychev V."/>
            <person name="Polouchine N."/>
            <person name="Shakhova V."/>
            <person name="Grigoriev I."/>
            <person name="Lou Y."/>
            <person name="Rohksar D."/>
            <person name="Lucas S."/>
            <person name="Huang K."/>
            <person name="Goodstein D.M."/>
            <person name="Hawkins T."/>
            <person name="Plengvidhya V."/>
            <person name="Welker D."/>
            <person name="Hughes J."/>
            <person name="Goh Y."/>
            <person name="Benson A."/>
            <person name="Baldwin K."/>
            <person name="Lee J.-H."/>
            <person name="Diaz-Muniz I."/>
            <person name="Dosti B."/>
            <person name="Smeianov V."/>
            <person name="Wechter W."/>
            <person name="Barabote R."/>
            <person name="Lorca G."/>
            <person name="Altermann E."/>
            <person name="Barrangou R."/>
            <person name="Ganesan B."/>
            <person name="Xie Y."/>
            <person name="Rawsthorne H."/>
            <person name="Tamir D."/>
            <person name="Parker C."/>
            <person name="Breidt F."/>
            <person name="Broadbent J.R."/>
            <person name="Hutkins R."/>
            <person name="O'Sullivan D."/>
            <person name="Steele J."/>
            <person name="Unlu G."/>
            <person name="Saier M.H. Jr."/>
            <person name="Klaenhammer T."/>
            <person name="Richardson P."/>
            <person name="Kozyavkin S."/>
            <person name="Weimer B.C."/>
            <person name="Mills D.A."/>
        </authorList>
    </citation>
    <scope>NUCLEOTIDE SEQUENCE [LARGE SCALE GENOMIC DNA]</scope>
    <source>
        <strain>ATCC 25745 / CCUG 21536 / LMG 10740 / 183-1w</strain>
    </source>
</reference>
<name>CCA_PEDPA</name>
<protein>
    <recommendedName>
        <fullName evidence="1">CCA-adding enzyme</fullName>
        <ecNumber evidence="1">2.7.7.72</ecNumber>
    </recommendedName>
    <alternativeName>
        <fullName evidence="1">CCA tRNA nucleotidyltransferase</fullName>
    </alternativeName>
    <alternativeName>
        <fullName evidence="1">tRNA CCA-pyrophosphorylase</fullName>
    </alternativeName>
    <alternativeName>
        <fullName evidence="1">tRNA adenylyl-/cytidylyl- transferase</fullName>
    </alternativeName>
    <alternativeName>
        <fullName evidence="1">tRNA nucleotidyltransferase</fullName>
    </alternativeName>
    <alternativeName>
        <fullName evidence="1">tRNA-NT</fullName>
    </alternativeName>
</protein>
<sequence length="396" mass="45326">MPQEFEDARAVLQKIEDAGFDAFFVGGSVRDTLLNKPIHDVDIASSAYPAEIKHIFKKTVDTGIEHGTVMVIHDGEGYEVTTFRTESGYQDFRRPDQVTFVRSLKEDLMRRDFTINAFALKEDRTVIDIFDGLSDLEHKIIRAVGDPHERFHEDALRMMRAVRFASQLDFKIEAKTLKAIEENNMLLGKISVERILVEFEKMMLGSKPNRGLEDMLTTKLNEYCPGFKDRSKELDQLTKYPLKLLENPEQVWTMIAWSLKLTPQEVMPFLKQWKTSNDLIKNVSATLQVLSMDKNDQNERLALFNAGEANVVNAIRVAQILGMNREAWLDTYQNLQIKDTHEMAITGKELIQKGIIKPGPQMGQVLNRLKLMVINDELKNESLALLNAVNKLQKDD</sequence>
<keyword id="KW-0067">ATP-binding</keyword>
<keyword id="KW-0460">Magnesium</keyword>
<keyword id="KW-0479">Metal-binding</keyword>
<keyword id="KW-0547">Nucleotide-binding</keyword>
<keyword id="KW-0548">Nucleotidyltransferase</keyword>
<keyword id="KW-0692">RNA repair</keyword>
<keyword id="KW-0694">RNA-binding</keyword>
<keyword id="KW-0808">Transferase</keyword>
<keyword id="KW-0819">tRNA processing</keyword>
<comment type="function">
    <text evidence="1">Catalyzes the addition and repair of the essential 3'-terminal CCA sequence in tRNAs without using a nucleic acid template. Adds these three nucleotides in the order of C, C, and A to the tRNA nucleotide-73, using CTP and ATP as substrates and producing inorganic pyrophosphate. tRNA 3'-terminal CCA addition is required both for tRNA processing and repair. Also involved in tRNA surveillance by mediating tandem CCA addition to generate a CCACCA at the 3' terminus of unstable tRNAs. While stable tRNAs receive only 3'-terminal CCA, unstable tRNAs are marked with CCACCA and rapidly degraded.</text>
</comment>
<comment type="catalytic activity">
    <reaction evidence="1">
        <text>a tRNA precursor + 2 CTP + ATP = a tRNA with a 3' CCA end + 3 diphosphate</text>
        <dbReference type="Rhea" id="RHEA:14433"/>
        <dbReference type="Rhea" id="RHEA-COMP:10465"/>
        <dbReference type="Rhea" id="RHEA-COMP:10468"/>
        <dbReference type="ChEBI" id="CHEBI:30616"/>
        <dbReference type="ChEBI" id="CHEBI:33019"/>
        <dbReference type="ChEBI" id="CHEBI:37563"/>
        <dbReference type="ChEBI" id="CHEBI:74896"/>
        <dbReference type="ChEBI" id="CHEBI:83071"/>
        <dbReference type="EC" id="2.7.7.72"/>
    </reaction>
</comment>
<comment type="catalytic activity">
    <reaction evidence="1">
        <text>a tRNA with a 3' CCA end + 2 CTP + ATP = a tRNA with a 3' CCACCA end + 3 diphosphate</text>
        <dbReference type="Rhea" id="RHEA:76235"/>
        <dbReference type="Rhea" id="RHEA-COMP:10468"/>
        <dbReference type="Rhea" id="RHEA-COMP:18655"/>
        <dbReference type="ChEBI" id="CHEBI:30616"/>
        <dbReference type="ChEBI" id="CHEBI:33019"/>
        <dbReference type="ChEBI" id="CHEBI:37563"/>
        <dbReference type="ChEBI" id="CHEBI:83071"/>
        <dbReference type="ChEBI" id="CHEBI:195187"/>
    </reaction>
    <physiologicalReaction direction="left-to-right" evidence="1">
        <dbReference type="Rhea" id="RHEA:76236"/>
    </physiologicalReaction>
</comment>
<comment type="cofactor">
    <cofactor evidence="1">
        <name>Mg(2+)</name>
        <dbReference type="ChEBI" id="CHEBI:18420"/>
    </cofactor>
</comment>
<comment type="subunit">
    <text evidence="1">Homodimer.</text>
</comment>
<comment type="miscellaneous">
    <text evidence="1">A single active site specifically recognizes both ATP and CTP and is responsible for their addition.</text>
</comment>
<comment type="similarity">
    <text evidence="1">Belongs to the tRNA nucleotidyltransferase/poly(A) polymerase family. Bacterial CCA-adding enzyme type 3 subfamily.</text>
</comment>
<proteinExistence type="inferred from homology"/>
<gene>
    <name evidence="1" type="primary">cca</name>
    <name type="ordered locus">PEPE_1072</name>
</gene>
<feature type="chain" id="PRO_1000054332" description="CCA-adding enzyme">
    <location>
        <begin position="1"/>
        <end position="396"/>
    </location>
</feature>
<feature type="binding site" evidence="1">
    <location>
        <position position="27"/>
    </location>
    <ligand>
        <name>ATP</name>
        <dbReference type="ChEBI" id="CHEBI:30616"/>
    </ligand>
</feature>
<feature type="binding site" evidence="1">
    <location>
        <position position="27"/>
    </location>
    <ligand>
        <name>CTP</name>
        <dbReference type="ChEBI" id="CHEBI:37563"/>
    </ligand>
</feature>
<feature type="binding site" evidence="1">
    <location>
        <position position="30"/>
    </location>
    <ligand>
        <name>ATP</name>
        <dbReference type="ChEBI" id="CHEBI:30616"/>
    </ligand>
</feature>
<feature type="binding site" evidence="1">
    <location>
        <position position="30"/>
    </location>
    <ligand>
        <name>CTP</name>
        <dbReference type="ChEBI" id="CHEBI:37563"/>
    </ligand>
</feature>
<feature type="binding site" evidence="1">
    <location>
        <position position="40"/>
    </location>
    <ligand>
        <name>Mg(2+)</name>
        <dbReference type="ChEBI" id="CHEBI:18420"/>
    </ligand>
</feature>
<feature type="binding site" evidence="1">
    <location>
        <position position="42"/>
    </location>
    <ligand>
        <name>Mg(2+)</name>
        <dbReference type="ChEBI" id="CHEBI:18420"/>
    </ligand>
</feature>
<feature type="binding site" evidence="1">
    <location>
        <position position="111"/>
    </location>
    <ligand>
        <name>ATP</name>
        <dbReference type="ChEBI" id="CHEBI:30616"/>
    </ligand>
</feature>
<feature type="binding site" evidence="1">
    <location>
        <position position="111"/>
    </location>
    <ligand>
        <name>CTP</name>
        <dbReference type="ChEBI" id="CHEBI:37563"/>
    </ligand>
</feature>
<feature type="binding site" evidence="1">
    <location>
        <position position="154"/>
    </location>
    <ligand>
        <name>ATP</name>
        <dbReference type="ChEBI" id="CHEBI:30616"/>
    </ligand>
</feature>
<feature type="binding site" evidence="1">
    <location>
        <position position="154"/>
    </location>
    <ligand>
        <name>CTP</name>
        <dbReference type="ChEBI" id="CHEBI:37563"/>
    </ligand>
</feature>
<feature type="binding site" evidence="1">
    <location>
        <position position="157"/>
    </location>
    <ligand>
        <name>ATP</name>
        <dbReference type="ChEBI" id="CHEBI:30616"/>
    </ligand>
</feature>
<feature type="binding site" evidence="1">
    <location>
        <position position="157"/>
    </location>
    <ligand>
        <name>CTP</name>
        <dbReference type="ChEBI" id="CHEBI:37563"/>
    </ligand>
</feature>
<feature type="binding site" evidence="1">
    <location>
        <position position="160"/>
    </location>
    <ligand>
        <name>ATP</name>
        <dbReference type="ChEBI" id="CHEBI:30616"/>
    </ligand>
</feature>
<feature type="binding site" evidence="1">
    <location>
        <position position="160"/>
    </location>
    <ligand>
        <name>CTP</name>
        <dbReference type="ChEBI" id="CHEBI:37563"/>
    </ligand>
</feature>
<feature type="binding site" evidence="1">
    <location>
        <position position="163"/>
    </location>
    <ligand>
        <name>ATP</name>
        <dbReference type="ChEBI" id="CHEBI:30616"/>
    </ligand>
</feature>
<feature type="binding site" evidence="1">
    <location>
        <position position="163"/>
    </location>
    <ligand>
        <name>CTP</name>
        <dbReference type="ChEBI" id="CHEBI:37563"/>
    </ligand>
</feature>
<evidence type="ECO:0000255" key="1">
    <source>
        <dbReference type="HAMAP-Rule" id="MF_01263"/>
    </source>
</evidence>
<dbReference type="EC" id="2.7.7.72" evidence="1"/>
<dbReference type="EMBL" id="CP000422">
    <property type="protein sequence ID" value="ABJ68128.1"/>
    <property type="molecule type" value="Genomic_DNA"/>
</dbReference>
<dbReference type="SMR" id="Q03F94"/>
<dbReference type="STRING" id="278197.PEPE_1072"/>
<dbReference type="KEGG" id="ppe:PEPE_1072"/>
<dbReference type="eggNOG" id="COG0617">
    <property type="taxonomic scope" value="Bacteria"/>
</dbReference>
<dbReference type="HOGENOM" id="CLU_015961_3_1_9"/>
<dbReference type="Proteomes" id="UP000000773">
    <property type="component" value="Chromosome"/>
</dbReference>
<dbReference type="GO" id="GO:0005524">
    <property type="term" value="F:ATP binding"/>
    <property type="evidence" value="ECO:0007669"/>
    <property type="project" value="UniProtKB-UniRule"/>
</dbReference>
<dbReference type="GO" id="GO:0004810">
    <property type="term" value="F:CCA tRNA nucleotidyltransferase activity"/>
    <property type="evidence" value="ECO:0007669"/>
    <property type="project" value="UniProtKB-UniRule"/>
</dbReference>
<dbReference type="GO" id="GO:0000287">
    <property type="term" value="F:magnesium ion binding"/>
    <property type="evidence" value="ECO:0007669"/>
    <property type="project" value="UniProtKB-UniRule"/>
</dbReference>
<dbReference type="GO" id="GO:0000049">
    <property type="term" value="F:tRNA binding"/>
    <property type="evidence" value="ECO:0007669"/>
    <property type="project" value="UniProtKB-UniRule"/>
</dbReference>
<dbReference type="GO" id="GO:0042245">
    <property type="term" value="P:RNA repair"/>
    <property type="evidence" value="ECO:0007669"/>
    <property type="project" value="UniProtKB-KW"/>
</dbReference>
<dbReference type="GO" id="GO:0001680">
    <property type="term" value="P:tRNA 3'-terminal CCA addition"/>
    <property type="evidence" value="ECO:0007669"/>
    <property type="project" value="UniProtKB-UniRule"/>
</dbReference>
<dbReference type="CDD" id="cd05398">
    <property type="entry name" value="NT_ClassII-CCAase"/>
    <property type="match status" value="1"/>
</dbReference>
<dbReference type="Gene3D" id="1.10.110.30">
    <property type="match status" value="1"/>
</dbReference>
<dbReference type="Gene3D" id="1.10.246.80">
    <property type="match status" value="1"/>
</dbReference>
<dbReference type="Gene3D" id="1.20.58.560">
    <property type="match status" value="1"/>
</dbReference>
<dbReference type="Gene3D" id="3.30.460.10">
    <property type="entry name" value="Beta Polymerase, domain 2"/>
    <property type="match status" value="1"/>
</dbReference>
<dbReference type="HAMAP" id="MF_01263">
    <property type="entry name" value="CCA_bact_type3"/>
    <property type="match status" value="1"/>
</dbReference>
<dbReference type="InterPro" id="IPR050264">
    <property type="entry name" value="Bact_CCA-adding_enz_type3_sf"/>
</dbReference>
<dbReference type="InterPro" id="IPR032810">
    <property type="entry name" value="CCA-adding_enz_C"/>
</dbReference>
<dbReference type="InterPro" id="IPR023068">
    <property type="entry name" value="CCA-adding_enz_firmicutes"/>
</dbReference>
<dbReference type="InterPro" id="IPR043519">
    <property type="entry name" value="NT_sf"/>
</dbReference>
<dbReference type="InterPro" id="IPR002646">
    <property type="entry name" value="PolA_pol_head_dom"/>
</dbReference>
<dbReference type="InterPro" id="IPR032828">
    <property type="entry name" value="PolyA_RNA-bd"/>
</dbReference>
<dbReference type="NCBIfam" id="NF009814">
    <property type="entry name" value="PRK13299.1"/>
    <property type="match status" value="1"/>
</dbReference>
<dbReference type="PANTHER" id="PTHR46173">
    <property type="entry name" value="CCA TRNA NUCLEOTIDYLTRANSFERASE 1, MITOCHONDRIAL"/>
    <property type="match status" value="1"/>
</dbReference>
<dbReference type="PANTHER" id="PTHR46173:SF1">
    <property type="entry name" value="CCA TRNA NUCLEOTIDYLTRANSFERASE 1, MITOCHONDRIAL"/>
    <property type="match status" value="1"/>
</dbReference>
<dbReference type="Pfam" id="PF01743">
    <property type="entry name" value="PolyA_pol"/>
    <property type="match status" value="1"/>
</dbReference>
<dbReference type="Pfam" id="PF12627">
    <property type="entry name" value="PolyA_pol_RNAbd"/>
    <property type="match status" value="1"/>
</dbReference>
<dbReference type="Pfam" id="PF13735">
    <property type="entry name" value="tRNA_NucTran2_2"/>
    <property type="match status" value="1"/>
</dbReference>
<dbReference type="SUPFAM" id="SSF81301">
    <property type="entry name" value="Nucleotidyltransferase"/>
    <property type="match status" value="1"/>
</dbReference>
<dbReference type="SUPFAM" id="SSF81891">
    <property type="entry name" value="Poly A polymerase C-terminal region-like"/>
    <property type="match status" value="1"/>
</dbReference>
<accession>Q03F94</accession>